<feature type="signal peptide" evidence="5">
    <location>
        <begin position="1"/>
        <end position="24"/>
    </location>
</feature>
<feature type="propeptide" id="PRO_0000391810" evidence="1">
    <location>
        <begin position="25"/>
        <end position="45"/>
    </location>
</feature>
<feature type="chain" id="PRO_0000391811" description="Alpha-conotoxin-like Cp20.4">
    <location>
        <begin position="46"/>
        <end position="95"/>
    </location>
</feature>
<feature type="modified residue" description="4-carboxyglutamate" evidence="1">
    <location>
        <position position="50"/>
    </location>
</feature>
<feature type="modified residue" description="4-hydroxyproline" evidence="1">
    <location>
        <position position="56"/>
    </location>
</feature>
<feature type="disulfide bond" description="Interchain (with C-63)" evidence="2">
    <location>
        <position position="51"/>
    </location>
</feature>
<feature type="disulfide bond" description="Interchain (with C-51)" evidence="2">
    <location>
        <position position="63"/>
    </location>
</feature>
<feature type="disulfide bond" evidence="2">
    <location>
        <begin position="64"/>
        <end position="73"/>
    </location>
</feature>
<feature type="disulfide bond" evidence="2">
    <location>
        <begin position="69"/>
        <end position="81"/>
    </location>
</feature>
<feature type="disulfide bond" evidence="2">
    <location>
        <begin position="74"/>
        <end position="91"/>
    </location>
</feature>
<feature type="disulfide bond" evidence="2">
    <location>
        <begin position="79"/>
        <end position="93"/>
    </location>
</feature>
<accession>P0CE26</accession>
<evidence type="ECO:0000250" key="1"/>
<evidence type="ECO:0000250" key="2">
    <source>
        <dbReference type="UniProtKB" id="A0A0A0VBX4"/>
    </source>
</evidence>
<evidence type="ECO:0000250" key="3">
    <source>
        <dbReference type="UniProtKB" id="C3VVN5"/>
    </source>
</evidence>
<evidence type="ECO:0000250" key="4">
    <source>
        <dbReference type="UniProtKB" id="P0C1W6"/>
    </source>
</evidence>
<evidence type="ECO:0000255" key="5"/>
<evidence type="ECO:0000305" key="6"/>
<organism>
    <name type="scientific">Conus capitaneus</name>
    <name type="common">Captain cone</name>
    <dbReference type="NCBI Taxonomy" id="89439"/>
    <lineage>
        <taxon>Eukaryota</taxon>
        <taxon>Metazoa</taxon>
        <taxon>Spiralia</taxon>
        <taxon>Lophotrochozoa</taxon>
        <taxon>Mollusca</taxon>
        <taxon>Gastropoda</taxon>
        <taxon>Caenogastropoda</taxon>
        <taxon>Neogastropoda</taxon>
        <taxon>Conoidea</taxon>
        <taxon>Conidae</taxon>
        <taxon>Conus</taxon>
        <taxon>Rhizoconus</taxon>
    </lineage>
</organism>
<reference key="1">
    <citation type="journal article" date="2009" name="Biochemistry">
        <title>Novel alpha D-conopeptides and their precursors identified by cDNA cloning define the D-conotoxin superfamily.</title>
        <authorList>
            <person name="Loughnan M.L."/>
            <person name="Nicke A."/>
            <person name="Lawrence N."/>
            <person name="Lewis R.J."/>
        </authorList>
    </citation>
    <scope>NUCLEOTIDE SEQUENCE [MRNA]</scope>
    <source>
        <tissue>Venom duct</tissue>
    </source>
</reference>
<keyword id="KW-0008">Acetylcholine receptor inhibiting toxin</keyword>
<keyword id="KW-1015">Disulfide bond</keyword>
<keyword id="KW-0301">Gamma-carboxyglutamic acid</keyword>
<keyword id="KW-0379">Hydroxylation</keyword>
<keyword id="KW-0872">Ion channel impairing toxin</keyword>
<keyword id="KW-0528">Neurotoxin</keyword>
<keyword id="KW-0629">Postsynaptic neurotoxin</keyword>
<keyword id="KW-0964">Secreted</keyword>
<keyword id="KW-0732">Signal</keyword>
<keyword id="KW-0800">Toxin</keyword>
<protein>
    <recommendedName>
        <fullName>Alpha-conotoxin-like Cp20.4</fullName>
    </recommendedName>
</protein>
<sequence length="95" mass="10608">MPKLEMMLVVLLIFPLFYFDAAGGQAVQGDRRGDGLARYLQRGDRNDESECIISTPGSSWGRCCLTRMCGTMCCPRSGCYCVYHWRRGHGCACSD</sequence>
<dbReference type="SMR" id="P0CE26"/>
<dbReference type="GO" id="GO:0005576">
    <property type="term" value="C:extracellular region"/>
    <property type="evidence" value="ECO:0007669"/>
    <property type="project" value="UniProtKB-SubCell"/>
</dbReference>
<dbReference type="GO" id="GO:0035792">
    <property type="term" value="C:host cell postsynaptic membrane"/>
    <property type="evidence" value="ECO:0007669"/>
    <property type="project" value="UniProtKB-KW"/>
</dbReference>
<dbReference type="GO" id="GO:0030550">
    <property type="term" value="F:acetylcholine receptor inhibitor activity"/>
    <property type="evidence" value="ECO:0007669"/>
    <property type="project" value="UniProtKB-KW"/>
</dbReference>
<dbReference type="GO" id="GO:0099106">
    <property type="term" value="F:ion channel regulator activity"/>
    <property type="evidence" value="ECO:0007669"/>
    <property type="project" value="UniProtKB-KW"/>
</dbReference>
<dbReference type="GO" id="GO:0090729">
    <property type="term" value="F:toxin activity"/>
    <property type="evidence" value="ECO:0007669"/>
    <property type="project" value="UniProtKB-KW"/>
</dbReference>
<proteinExistence type="evidence at transcript level"/>
<comment type="function">
    <text evidence="4">Alpha-conotoxins act on postsynaptic membranes, they bind to the nicotinic acetylcholine receptors (nAChR) and thus inhibit them. Through its two C-terminal domains, this homodimeric protein would bind to two nAChR allosteric sites, located outside the nAChR C-loop of the principal binding face and at the adjacent binding interface in a clockwise direction. This toxin specifically blocks mammalian neuronal nAChR of the alpha-7/CHRNA7, alpha-3-beta-2/CHRNA3-CHRNB2 and alpha-4-beta-2/CHRNA4-CHRNB2 subtypes.</text>
</comment>
<comment type="subunit">
    <text evidence="3">Hetero-, homo- or pseudo-homodimer (identical sequence, different post-translational modifications).</text>
</comment>
<comment type="subcellular location">
    <subcellularLocation>
        <location>Secreted</location>
    </subcellularLocation>
</comment>
<comment type="tissue specificity">
    <text>Expressed by the venom duct.</text>
</comment>
<comment type="domain">
    <text>The cysteine framework is XX (C-CC-C-CC-C-C-C-C).</text>
</comment>
<comment type="domain">
    <text evidence="4">Displays a mini-granulin fold, a structure composed of two short, stacked beta-hairpins connected by two parallel disulfide bonds. This newly described fold is derived from the same cysteine connectivity as knottins (ICK fold). The name 'mini-granulin fold' comes from the structural homology with the N-terminal region of the human granulin.</text>
</comment>
<comment type="similarity">
    <text evidence="6">Belongs to the conotoxin D superfamily.</text>
</comment>
<name>CXAT4_CONCE</name>